<feature type="peptide" id="PRO_0000043434" description="Hypertrehalosaemic factor 2">
    <location>
        <begin position="1"/>
        <end position="8"/>
    </location>
</feature>
<feature type="modified residue" description="Pyrrolidone carboxylic acid" evidence="1">
    <location>
        <position position="1"/>
    </location>
</feature>
<feature type="modified residue" description="Tryptophan amide" evidence="1">
    <location>
        <position position="8"/>
    </location>
</feature>
<comment type="function">
    <text evidence="1">Hypertrehalosaemic factors are neuropeptides that elevate the level of trehalose in the hemolymph (trehalose is the major carbohydrate in the hemolymph of insects). Involved in the control of amino acid metabolism during flight.</text>
</comment>
<comment type="subcellular location">
    <subcellularLocation>
        <location evidence="1">Secreted</location>
    </subcellularLocation>
</comment>
<comment type="similarity">
    <text evidence="2">Belongs to the AKH/HRTH/RPCH family.</text>
</comment>
<accession>P84257</accession>
<accession>P04549</accession>
<sequence>QLTFTPNW</sequence>
<dbReference type="PIR" id="B44960">
    <property type="entry name" value="B44960"/>
</dbReference>
<dbReference type="GO" id="GO:0005576">
    <property type="term" value="C:extracellular region"/>
    <property type="evidence" value="ECO:0007669"/>
    <property type="project" value="UniProtKB-SubCell"/>
</dbReference>
<dbReference type="GO" id="GO:0005179">
    <property type="term" value="F:hormone activity"/>
    <property type="evidence" value="ECO:0007669"/>
    <property type="project" value="UniProtKB-KW"/>
</dbReference>
<dbReference type="GO" id="GO:0007218">
    <property type="term" value="P:neuropeptide signaling pathway"/>
    <property type="evidence" value="ECO:0007669"/>
    <property type="project" value="UniProtKB-KW"/>
</dbReference>
<dbReference type="InterPro" id="IPR002047">
    <property type="entry name" value="Adipokinetic_hormone_CS"/>
</dbReference>
<dbReference type="PROSITE" id="PS00256">
    <property type="entry name" value="AKH"/>
    <property type="match status" value="1"/>
</dbReference>
<organism>
    <name type="scientific">Leptinotarsa decemlineata</name>
    <name type="common">Colorado potato beetle</name>
    <name type="synonym">Doryphora decemlineata</name>
    <dbReference type="NCBI Taxonomy" id="7539"/>
    <lineage>
        <taxon>Eukaryota</taxon>
        <taxon>Metazoa</taxon>
        <taxon>Ecdysozoa</taxon>
        <taxon>Arthropoda</taxon>
        <taxon>Hexapoda</taxon>
        <taxon>Insecta</taxon>
        <taxon>Pterygota</taxon>
        <taxon>Neoptera</taxon>
        <taxon>Endopterygota</taxon>
        <taxon>Coleoptera</taxon>
        <taxon>Polyphaga</taxon>
        <taxon>Cucujiformia</taxon>
        <taxon>Chrysomeloidea</taxon>
        <taxon>Chrysomelidae</taxon>
        <taxon>Chrysomelinae</taxon>
        <taxon>Doryphorini</taxon>
        <taxon>Leptinotarsa</taxon>
    </lineage>
</organism>
<name>HTF2_LEPDE</name>
<proteinExistence type="evidence at protein level"/>
<evidence type="ECO:0000269" key="1">
    <source>
    </source>
</evidence>
<evidence type="ECO:0000305" key="2"/>
<reference key="1">
    <citation type="journal article" date="1989" name="Peptides">
        <title>The metabolic neuropeptides of the corpus cardiacum from the potato beetle and the American cockroach are identical.</title>
        <authorList>
            <person name="Gaede G."/>
            <person name="Kellner R."/>
        </authorList>
    </citation>
    <scope>PROTEIN SEQUENCE</scope>
    <scope>FUNCTION</scope>
    <scope>PYROGLUTAMATE FORMATION AT GLN-1</scope>
    <scope>AMIDATION AT TRP-8</scope>
    <scope>SUBCELLULAR LOCATION</scope>
    <source>
        <tissue>Corpora cardiaca</tissue>
    </source>
</reference>
<protein>
    <recommendedName>
        <fullName>Hypertrehalosaemic factor 2</fullName>
    </recommendedName>
    <alternativeName>
        <fullName>Hypertrehalosaemic factor II</fullName>
    </alternativeName>
    <alternativeName>
        <fullName>LeD-CC-II</fullName>
    </alternativeName>
</protein>
<keyword id="KW-0027">Amidation</keyword>
<keyword id="KW-0903">Direct protein sequencing</keyword>
<keyword id="KW-0372">Hormone</keyword>
<keyword id="KW-0527">Neuropeptide</keyword>
<keyword id="KW-0873">Pyrrolidone carboxylic acid</keyword>
<keyword id="KW-0964">Secreted</keyword>